<protein>
    <recommendedName>
        <fullName>RIB43A-like with coiled-coils protein 1</fullName>
    </recommendedName>
</protein>
<evidence type="ECO:0000250" key="1">
    <source>
        <dbReference type="UniProtKB" id="Q9D0B8"/>
    </source>
</evidence>
<evidence type="ECO:0000255" key="2"/>
<evidence type="ECO:0000305" key="3"/>
<proteinExistence type="evidence at transcript level"/>
<accession>Q6AYL4</accession>
<gene>
    <name type="primary">Ribc1</name>
</gene>
<sequence>MYKLDLAPDPKELAAIEARRNREKERQCRFFNVRNRVMGVDVEALNYQVEERKFREAIERSKDMAYGAKHAHYDLVAQMLEKEEAERACRLSKRVQDFREQRQQFKNGHEFDFWDPDHVQEFQVPYYENEAYFGPASMQYFLGEDLERASHLRMQQEQLRYNLEKQLQEQQAAREEEARAALLSDQLRLAADTRAAELARLEESCRAAMRTAMANANKAQAAKQALLQRREQQQQQEANLAEIKKQVTSDLLTENPQVAQRPSAPHRVLPYCWKGMTAEQRAAIRKTQENQRQEKKEQRQAEKLVEAEWGSQSKRLAEAALELEEQERELCAEFRRGLGSFNRELAKEQHAQQNYLNSVIYTNQPTSHYYLQFNTSSR</sequence>
<organism>
    <name type="scientific">Rattus norvegicus</name>
    <name type="common">Rat</name>
    <dbReference type="NCBI Taxonomy" id="10116"/>
    <lineage>
        <taxon>Eukaryota</taxon>
        <taxon>Metazoa</taxon>
        <taxon>Chordata</taxon>
        <taxon>Craniata</taxon>
        <taxon>Vertebrata</taxon>
        <taxon>Euteleostomi</taxon>
        <taxon>Mammalia</taxon>
        <taxon>Eutheria</taxon>
        <taxon>Euarchontoglires</taxon>
        <taxon>Glires</taxon>
        <taxon>Rodentia</taxon>
        <taxon>Myomorpha</taxon>
        <taxon>Muroidea</taxon>
        <taxon>Muridae</taxon>
        <taxon>Murinae</taxon>
        <taxon>Rattus</taxon>
    </lineage>
</organism>
<feature type="chain" id="PRO_0000254096" description="RIB43A-like with coiled-coils protein 1">
    <location>
        <begin position="1"/>
        <end position="378"/>
    </location>
</feature>
<feature type="coiled-coil region" evidence="2">
    <location>
        <begin position="153"/>
        <end position="250"/>
    </location>
</feature>
<feature type="coiled-coil region" evidence="2">
    <location>
        <begin position="279"/>
        <end position="334"/>
    </location>
</feature>
<reference key="1">
    <citation type="journal article" date="2004" name="Genome Res.">
        <title>The status, quality, and expansion of the NIH full-length cDNA project: the Mammalian Gene Collection (MGC).</title>
        <authorList>
            <consortium name="The MGC Project Team"/>
        </authorList>
    </citation>
    <scope>NUCLEOTIDE SEQUENCE [LARGE SCALE MRNA]</scope>
    <source>
        <tissue>Testis</tissue>
    </source>
</reference>
<dbReference type="EMBL" id="BC078998">
    <property type="protein sequence ID" value="AAH78998.1"/>
    <property type="molecule type" value="mRNA"/>
</dbReference>
<dbReference type="RefSeq" id="NP_001007716.1">
    <property type="nucleotide sequence ID" value="NM_001007715.2"/>
</dbReference>
<dbReference type="RefSeq" id="NP_001421099.1">
    <property type="nucleotide sequence ID" value="NM_001434170.1"/>
</dbReference>
<dbReference type="RefSeq" id="NP_001421101.1">
    <property type="nucleotide sequence ID" value="NM_001434172.1"/>
</dbReference>
<dbReference type="RefSeq" id="NP_001421103.1">
    <property type="nucleotide sequence ID" value="NM_001434174.1"/>
</dbReference>
<dbReference type="RefSeq" id="NP_001421105.1">
    <property type="nucleotide sequence ID" value="NM_001434176.1"/>
</dbReference>
<dbReference type="RefSeq" id="NP_001421107.1">
    <property type="nucleotide sequence ID" value="NM_001434178.1"/>
</dbReference>
<dbReference type="RefSeq" id="NP_001421109.1">
    <property type="nucleotide sequence ID" value="NM_001434180.1"/>
</dbReference>
<dbReference type="RefSeq" id="XP_006256862.1">
    <property type="nucleotide sequence ID" value="XM_006256800.3"/>
</dbReference>
<dbReference type="RefSeq" id="XP_006256863.1">
    <property type="nucleotide sequence ID" value="XM_006256801.3"/>
</dbReference>
<dbReference type="RefSeq" id="XP_006256864.1">
    <property type="nucleotide sequence ID" value="XM_006256802.3"/>
</dbReference>
<dbReference type="RefSeq" id="XP_006256865.1">
    <property type="nucleotide sequence ID" value="XM_006256803.3"/>
</dbReference>
<dbReference type="RefSeq" id="XP_006256866.1">
    <property type="nucleotide sequence ID" value="XM_006256804.2"/>
</dbReference>
<dbReference type="RefSeq" id="XP_006256867.1">
    <property type="nucleotide sequence ID" value="XM_006256805.3"/>
</dbReference>
<dbReference type="SMR" id="Q6AYL4"/>
<dbReference type="FunCoup" id="Q6AYL4">
    <property type="interactions" value="148"/>
</dbReference>
<dbReference type="IntAct" id="Q6AYL4">
    <property type="interactions" value="1"/>
</dbReference>
<dbReference type="STRING" id="10116.ENSRNOP00000071963"/>
<dbReference type="iPTMnet" id="Q6AYL4"/>
<dbReference type="PhosphoSitePlus" id="Q6AYL4"/>
<dbReference type="jPOST" id="Q6AYL4"/>
<dbReference type="PaxDb" id="10116-ENSRNOP00000004184"/>
<dbReference type="GeneID" id="317431"/>
<dbReference type="KEGG" id="rno:317431"/>
<dbReference type="AGR" id="RGD:1359621"/>
<dbReference type="CTD" id="158787"/>
<dbReference type="RGD" id="1359621">
    <property type="gene designation" value="Ribc1"/>
</dbReference>
<dbReference type="VEuPathDB" id="HostDB:ENSRNOG00000003081"/>
<dbReference type="eggNOG" id="ENOG502QWST">
    <property type="taxonomic scope" value="Eukaryota"/>
</dbReference>
<dbReference type="InParanoid" id="Q6AYL4"/>
<dbReference type="PhylomeDB" id="Q6AYL4"/>
<dbReference type="TreeFam" id="TF324120"/>
<dbReference type="PRO" id="PR:Q6AYL4"/>
<dbReference type="Proteomes" id="UP000002494">
    <property type="component" value="Chromosome X"/>
</dbReference>
<dbReference type="Bgee" id="ENSRNOG00000003081">
    <property type="expression patterns" value="Expressed in testis and 19 other cell types or tissues"/>
</dbReference>
<dbReference type="GO" id="GO:0160111">
    <property type="term" value="C:axonemal A tubule inner sheath"/>
    <property type="evidence" value="ECO:0000250"/>
    <property type="project" value="UniProtKB"/>
</dbReference>
<dbReference type="GO" id="GO:0036126">
    <property type="term" value="C:sperm flagellum"/>
    <property type="evidence" value="ECO:0000250"/>
    <property type="project" value="UniProtKB"/>
</dbReference>
<dbReference type="GO" id="GO:0030317">
    <property type="term" value="P:flagellated sperm motility"/>
    <property type="evidence" value="ECO:0000250"/>
    <property type="project" value="UniProtKB"/>
</dbReference>
<dbReference type="InterPro" id="IPR008805">
    <property type="entry name" value="RIB43A"/>
</dbReference>
<dbReference type="PANTHER" id="PTHR14517:SF11">
    <property type="entry name" value="RIB43A-LIKE WITH COILED-COILS PROTEIN 1"/>
    <property type="match status" value="1"/>
</dbReference>
<dbReference type="PANTHER" id="PTHR14517">
    <property type="entry name" value="RIB43A-RELATED"/>
    <property type="match status" value="1"/>
</dbReference>
<dbReference type="Pfam" id="PF05914">
    <property type="entry name" value="RIB43A"/>
    <property type="match status" value="1"/>
</dbReference>
<keyword id="KW-0966">Cell projection</keyword>
<keyword id="KW-0969">Cilium</keyword>
<keyword id="KW-0175">Coiled coil</keyword>
<keyword id="KW-0963">Cytoplasm</keyword>
<keyword id="KW-0206">Cytoskeleton</keyword>
<keyword id="KW-0282">Flagellum</keyword>
<keyword id="KW-1185">Reference proteome</keyword>
<comment type="subunit">
    <text evidence="1">Microtubule inner protein component of sperm flagellar doublet microtubules.</text>
</comment>
<comment type="subcellular location">
    <subcellularLocation>
        <location evidence="1">Cytoplasm</location>
        <location evidence="1">Cytoskeleton</location>
        <location evidence="1">Flagellum axoneme</location>
    </subcellularLocation>
</comment>
<comment type="similarity">
    <text evidence="3">Belongs to the RIB43A family.</text>
</comment>
<name>RIBC1_RAT</name>